<reference key="1">
    <citation type="journal article" date="2005" name="Nature">
        <title>Genomic sequence of the pathogenic and allergenic filamentous fungus Aspergillus fumigatus.</title>
        <authorList>
            <person name="Nierman W.C."/>
            <person name="Pain A."/>
            <person name="Anderson M.J."/>
            <person name="Wortman J.R."/>
            <person name="Kim H.S."/>
            <person name="Arroyo J."/>
            <person name="Berriman M."/>
            <person name="Abe K."/>
            <person name="Archer D.B."/>
            <person name="Bermejo C."/>
            <person name="Bennett J.W."/>
            <person name="Bowyer P."/>
            <person name="Chen D."/>
            <person name="Collins M."/>
            <person name="Coulsen R."/>
            <person name="Davies R."/>
            <person name="Dyer P.S."/>
            <person name="Farman M.L."/>
            <person name="Fedorova N."/>
            <person name="Fedorova N.D."/>
            <person name="Feldblyum T.V."/>
            <person name="Fischer R."/>
            <person name="Fosker N."/>
            <person name="Fraser A."/>
            <person name="Garcia J.L."/>
            <person name="Garcia M.J."/>
            <person name="Goble A."/>
            <person name="Goldman G.H."/>
            <person name="Gomi K."/>
            <person name="Griffith-Jones S."/>
            <person name="Gwilliam R."/>
            <person name="Haas B.J."/>
            <person name="Haas H."/>
            <person name="Harris D.E."/>
            <person name="Horiuchi H."/>
            <person name="Huang J."/>
            <person name="Humphray S."/>
            <person name="Jimenez J."/>
            <person name="Keller N."/>
            <person name="Khouri H."/>
            <person name="Kitamoto K."/>
            <person name="Kobayashi T."/>
            <person name="Konzack S."/>
            <person name="Kulkarni R."/>
            <person name="Kumagai T."/>
            <person name="Lafton A."/>
            <person name="Latge J.-P."/>
            <person name="Li W."/>
            <person name="Lord A."/>
            <person name="Lu C."/>
            <person name="Majoros W.H."/>
            <person name="May G.S."/>
            <person name="Miller B.L."/>
            <person name="Mohamoud Y."/>
            <person name="Molina M."/>
            <person name="Monod M."/>
            <person name="Mouyna I."/>
            <person name="Mulligan S."/>
            <person name="Murphy L.D."/>
            <person name="O'Neil S."/>
            <person name="Paulsen I."/>
            <person name="Penalva M.A."/>
            <person name="Pertea M."/>
            <person name="Price C."/>
            <person name="Pritchard B.L."/>
            <person name="Quail M.A."/>
            <person name="Rabbinowitsch E."/>
            <person name="Rawlins N."/>
            <person name="Rajandream M.A."/>
            <person name="Reichard U."/>
            <person name="Renauld H."/>
            <person name="Robson G.D."/>
            <person name="Rodriguez de Cordoba S."/>
            <person name="Rodriguez-Pena J.M."/>
            <person name="Ronning C.M."/>
            <person name="Rutter S."/>
            <person name="Salzberg S.L."/>
            <person name="Sanchez M."/>
            <person name="Sanchez-Ferrero J.C."/>
            <person name="Saunders D."/>
            <person name="Seeger K."/>
            <person name="Squares R."/>
            <person name="Squares S."/>
            <person name="Takeuchi M."/>
            <person name="Tekaia F."/>
            <person name="Turner G."/>
            <person name="Vazquez de Aldana C.R."/>
            <person name="Weidman J."/>
            <person name="White O."/>
            <person name="Woodward J.R."/>
            <person name="Yu J.-H."/>
            <person name="Fraser C.M."/>
            <person name="Galagan J.E."/>
            <person name="Asai K."/>
            <person name="Machida M."/>
            <person name="Hall N."/>
            <person name="Barrell B.G."/>
            <person name="Denning D.W."/>
        </authorList>
    </citation>
    <scope>NUCLEOTIDE SEQUENCE [LARGE SCALE GENOMIC DNA]</scope>
    <source>
        <strain>ATCC MYA-4609 / CBS 101355 / FGSC A1100 / Af293</strain>
    </source>
</reference>
<protein>
    <recommendedName>
        <fullName evidence="1">Eukaryotic translation initiation factor 3 subunit I</fullName>
        <shortName evidence="1">eIF3i</shortName>
    </recommendedName>
    <alternativeName>
        <fullName evidence="1">Eukaryotic translation initiation factor 3 39 kDa subunit homolog</fullName>
        <shortName evidence="1">eIF-3 39 kDa subunit homolog</shortName>
    </alternativeName>
</protein>
<feature type="chain" id="PRO_0000365357" description="Eukaryotic translation initiation factor 3 subunit I">
    <location>
        <begin position="1"/>
        <end position="340"/>
    </location>
</feature>
<feature type="repeat" description="WD 1">
    <location>
        <begin position="8"/>
        <end position="47"/>
    </location>
</feature>
<feature type="repeat" description="WD 2">
    <location>
        <begin position="50"/>
        <end position="91"/>
    </location>
</feature>
<feature type="repeat" description="WD 3">
    <location>
        <begin position="150"/>
        <end position="189"/>
    </location>
</feature>
<feature type="repeat" description="WD 4">
    <location>
        <begin position="194"/>
        <end position="233"/>
    </location>
</feature>
<feature type="repeat" description="WD 5">
    <location>
        <begin position="291"/>
        <end position="330"/>
    </location>
</feature>
<evidence type="ECO:0000255" key="1">
    <source>
        <dbReference type="HAMAP-Rule" id="MF_03008"/>
    </source>
</evidence>
<comment type="function">
    <text evidence="1">Component of the eukaryotic translation initiation factor 3 (eIF-3) complex, which is involved in protein synthesis of a specialized repertoire of mRNAs and, together with other initiation factors, stimulates binding of mRNA and methionyl-tRNAi to the 40S ribosome. The eIF-3 complex specifically targets and initiates translation of a subset of mRNAs involved in cell proliferation.</text>
</comment>
<comment type="subunit">
    <text evidence="1">Component of the eukaryotic translation initiation factor 3 (eIF-3) complex.</text>
</comment>
<comment type="subcellular location">
    <subcellularLocation>
        <location evidence="1">Cytoplasm</location>
    </subcellularLocation>
</comment>
<comment type="similarity">
    <text evidence="1">Belongs to the eIF-3 subunit I family.</text>
</comment>
<name>EIF3I_ASPFU</name>
<gene>
    <name type="primary">tif34</name>
    <name type="ORF">AFUA_3G08640</name>
</gene>
<dbReference type="EMBL" id="AAHF01000002">
    <property type="protein sequence ID" value="EAL92713.1"/>
    <property type="molecule type" value="Genomic_DNA"/>
</dbReference>
<dbReference type="RefSeq" id="XP_754751.1">
    <property type="nucleotide sequence ID" value="XM_749658.1"/>
</dbReference>
<dbReference type="SMR" id="Q4WX90"/>
<dbReference type="FunCoup" id="Q4WX90">
    <property type="interactions" value="1084"/>
</dbReference>
<dbReference type="STRING" id="330879.Q4WX90"/>
<dbReference type="EnsemblFungi" id="EAL92713">
    <property type="protein sequence ID" value="EAL92713"/>
    <property type="gene ID" value="AFUA_3G08640"/>
</dbReference>
<dbReference type="GeneID" id="3512154"/>
<dbReference type="KEGG" id="afm:AFUA_3G08640"/>
<dbReference type="VEuPathDB" id="FungiDB:Afu3g08640"/>
<dbReference type="eggNOG" id="KOG0643">
    <property type="taxonomic scope" value="Eukaryota"/>
</dbReference>
<dbReference type="HOGENOM" id="CLU_043845_0_1_1"/>
<dbReference type="InParanoid" id="Q4WX90"/>
<dbReference type="OMA" id="VWFSHNG"/>
<dbReference type="OrthoDB" id="24966at2759"/>
<dbReference type="Proteomes" id="UP000002530">
    <property type="component" value="Chromosome 3"/>
</dbReference>
<dbReference type="GO" id="GO:0016282">
    <property type="term" value="C:eukaryotic 43S preinitiation complex"/>
    <property type="evidence" value="ECO:0007669"/>
    <property type="project" value="UniProtKB-UniRule"/>
</dbReference>
<dbReference type="GO" id="GO:0033290">
    <property type="term" value="C:eukaryotic 48S preinitiation complex"/>
    <property type="evidence" value="ECO:0007669"/>
    <property type="project" value="UniProtKB-UniRule"/>
</dbReference>
<dbReference type="GO" id="GO:0071540">
    <property type="term" value="C:eukaryotic translation initiation factor 3 complex, eIF3e"/>
    <property type="evidence" value="ECO:0007669"/>
    <property type="project" value="EnsemblFungi"/>
</dbReference>
<dbReference type="GO" id="GO:0071541">
    <property type="term" value="C:eukaryotic translation initiation factor 3 complex, eIF3m"/>
    <property type="evidence" value="ECO:0000318"/>
    <property type="project" value="GO_Central"/>
</dbReference>
<dbReference type="GO" id="GO:0034399">
    <property type="term" value="C:nuclear periphery"/>
    <property type="evidence" value="ECO:0007669"/>
    <property type="project" value="EnsemblFungi"/>
</dbReference>
<dbReference type="GO" id="GO:0003723">
    <property type="term" value="F:RNA binding"/>
    <property type="evidence" value="ECO:0000318"/>
    <property type="project" value="GO_Central"/>
</dbReference>
<dbReference type="GO" id="GO:0003743">
    <property type="term" value="F:translation initiation factor activity"/>
    <property type="evidence" value="ECO:0000318"/>
    <property type="project" value="GO_Central"/>
</dbReference>
<dbReference type="GO" id="GO:0002183">
    <property type="term" value="P:cytoplasmic translational initiation"/>
    <property type="evidence" value="ECO:0000318"/>
    <property type="project" value="GO_Central"/>
</dbReference>
<dbReference type="GO" id="GO:0001732">
    <property type="term" value="P:formation of cytoplasmic translation initiation complex"/>
    <property type="evidence" value="ECO:0007669"/>
    <property type="project" value="UniProtKB-UniRule"/>
</dbReference>
<dbReference type="FunFam" id="2.130.10.10:FF:000127">
    <property type="entry name" value="Eukaryotic translation initiation factor 3 subunit I"/>
    <property type="match status" value="1"/>
</dbReference>
<dbReference type="Gene3D" id="2.130.10.10">
    <property type="entry name" value="YVTN repeat-like/Quinoprotein amine dehydrogenase"/>
    <property type="match status" value="1"/>
</dbReference>
<dbReference type="HAMAP" id="MF_03008">
    <property type="entry name" value="eIF3i"/>
    <property type="match status" value="1"/>
</dbReference>
<dbReference type="InterPro" id="IPR027525">
    <property type="entry name" value="eIF3i"/>
</dbReference>
<dbReference type="InterPro" id="IPR015943">
    <property type="entry name" value="WD40/YVTN_repeat-like_dom_sf"/>
</dbReference>
<dbReference type="InterPro" id="IPR019775">
    <property type="entry name" value="WD40_repeat_CS"/>
</dbReference>
<dbReference type="InterPro" id="IPR036322">
    <property type="entry name" value="WD40_repeat_dom_sf"/>
</dbReference>
<dbReference type="InterPro" id="IPR001680">
    <property type="entry name" value="WD40_rpt"/>
</dbReference>
<dbReference type="PANTHER" id="PTHR19877">
    <property type="entry name" value="EUKARYOTIC TRANSLATION INITIATION FACTOR 3 SUBUNIT I"/>
    <property type="match status" value="1"/>
</dbReference>
<dbReference type="PANTHER" id="PTHR19877:SF1">
    <property type="entry name" value="EUKARYOTIC TRANSLATION INITIATION FACTOR 3 SUBUNIT I"/>
    <property type="match status" value="1"/>
</dbReference>
<dbReference type="Pfam" id="PF24805">
    <property type="entry name" value="EIF3I"/>
    <property type="match status" value="1"/>
</dbReference>
<dbReference type="SMART" id="SM00320">
    <property type="entry name" value="WD40"/>
    <property type="match status" value="6"/>
</dbReference>
<dbReference type="SUPFAM" id="SSF50978">
    <property type="entry name" value="WD40 repeat-like"/>
    <property type="match status" value="1"/>
</dbReference>
<dbReference type="PROSITE" id="PS00678">
    <property type="entry name" value="WD_REPEATS_1"/>
    <property type="match status" value="1"/>
</dbReference>
<dbReference type="PROSITE" id="PS50082">
    <property type="entry name" value="WD_REPEATS_2"/>
    <property type="match status" value="3"/>
</dbReference>
<dbReference type="PROSITE" id="PS50294">
    <property type="entry name" value="WD_REPEATS_REGION"/>
    <property type="match status" value="2"/>
</dbReference>
<organism>
    <name type="scientific">Aspergillus fumigatus (strain ATCC MYA-4609 / CBS 101355 / FGSC A1100 / Af293)</name>
    <name type="common">Neosartorya fumigata</name>
    <dbReference type="NCBI Taxonomy" id="330879"/>
    <lineage>
        <taxon>Eukaryota</taxon>
        <taxon>Fungi</taxon>
        <taxon>Dikarya</taxon>
        <taxon>Ascomycota</taxon>
        <taxon>Pezizomycotina</taxon>
        <taxon>Eurotiomycetes</taxon>
        <taxon>Eurotiomycetidae</taxon>
        <taxon>Eurotiales</taxon>
        <taxon>Aspergillaceae</taxon>
        <taxon>Aspergillus</taxon>
        <taxon>Aspergillus subgen. Fumigati</taxon>
    </lineage>
</organism>
<keyword id="KW-0963">Cytoplasm</keyword>
<keyword id="KW-0396">Initiation factor</keyword>
<keyword id="KW-0648">Protein biosynthesis</keyword>
<keyword id="KW-1185">Reference proteome</keyword>
<keyword id="KW-0677">Repeat</keyword>
<keyword id="KW-0853">WD repeat</keyword>
<accession>Q4WX90</accession>
<proteinExistence type="inferred from homology"/>
<sequence length="340" mass="37712">MRPILLSGHERSLNQIKFNRDGDLLFSVAKDKIVCAWWSANGERLGTYSGHQGAIWTVDVSPNTVLLATGSADNTVRLWNVKTGECVKVWDFPTAVKRVAFNPDGSRLLAVTEKRMGFLGTIAVLDINYGDSQGGGLENQADEPSLRITCTESKATVAGWSYLGKYIIAGHEDGSVSQYDGKTGEQLENVQAHEFDHQINDIQFSQDRTYFITASKDKSAKLISSRNLAILKTYVADTPLNSATITPKKDYVILGGGQAAMDVTTTSARQGKFEARFYHKVFEDEIGRVRGHFGPLNTVDVHPNGTAYASGGEDGYVRVHHFDKPYFDFMYEVEREQLRK</sequence>